<feature type="chain" id="PRO_0000314186" description="Junctional cadherin 5-associated protein">
    <location>
        <begin position="1"/>
        <end position="1320"/>
    </location>
</feature>
<feature type="region of interest" description="Disordered" evidence="2">
    <location>
        <begin position="1"/>
        <end position="124"/>
    </location>
</feature>
<feature type="region of interest" description="Disordered" evidence="2">
    <location>
        <begin position="183"/>
        <end position="202"/>
    </location>
</feature>
<feature type="region of interest" description="Disordered" evidence="2">
    <location>
        <begin position="209"/>
        <end position="233"/>
    </location>
</feature>
<feature type="region of interest" description="Disordered" evidence="2">
    <location>
        <begin position="252"/>
        <end position="426"/>
    </location>
</feature>
<feature type="region of interest" description="Disordered" evidence="2">
    <location>
        <begin position="452"/>
        <end position="492"/>
    </location>
</feature>
<feature type="region of interest" description="Disordered" evidence="2">
    <location>
        <begin position="676"/>
        <end position="720"/>
    </location>
</feature>
<feature type="region of interest" description="Disordered" evidence="2">
    <location>
        <begin position="741"/>
        <end position="802"/>
    </location>
</feature>
<feature type="region of interest" description="Disordered" evidence="2">
    <location>
        <begin position="835"/>
        <end position="942"/>
    </location>
</feature>
<feature type="region of interest" description="Disordered" evidence="2">
    <location>
        <begin position="1085"/>
        <end position="1116"/>
    </location>
</feature>
<feature type="region of interest" description="Disordered" evidence="2">
    <location>
        <begin position="1153"/>
        <end position="1174"/>
    </location>
</feature>
<feature type="region of interest" description="Disordered" evidence="2">
    <location>
        <begin position="1275"/>
        <end position="1320"/>
    </location>
</feature>
<feature type="compositionally biased region" description="Polar residues" evidence="2">
    <location>
        <begin position="58"/>
        <end position="71"/>
    </location>
</feature>
<feature type="compositionally biased region" description="Polar residues" evidence="2">
    <location>
        <begin position="95"/>
        <end position="107"/>
    </location>
</feature>
<feature type="compositionally biased region" description="Basic and acidic residues" evidence="2">
    <location>
        <begin position="108"/>
        <end position="119"/>
    </location>
</feature>
<feature type="compositionally biased region" description="Pro residues" evidence="2">
    <location>
        <begin position="255"/>
        <end position="267"/>
    </location>
</feature>
<feature type="compositionally biased region" description="Basic and acidic residues" evidence="2">
    <location>
        <begin position="308"/>
        <end position="329"/>
    </location>
</feature>
<feature type="compositionally biased region" description="Pro residues" evidence="2">
    <location>
        <begin position="338"/>
        <end position="356"/>
    </location>
</feature>
<feature type="compositionally biased region" description="Polar residues" evidence="2">
    <location>
        <begin position="369"/>
        <end position="378"/>
    </location>
</feature>
<feature type="compositionally biased region" description="Pro residues" evidence="2">
    <location>
        <begin position="404"/>
        <end position="415"/>
    </location>
</feature>
<feature type="compositionally biased region" description="Polar residues" evidence="2">
    <location>
        <begin position="454"/>
        <end position="465"/>
    </location>
</feature>
<feature type="compositionally biased region" description="Polar residues" evidence="2">
    <location>
        <begin position="741"/>
        <end position="782"/>
    </location>
</feature>
<feature type="compositionally biased region" description="Acidic residues" evidence="2">
    <location>
        <begin position="849"/>
        <end position="859"/>
    </location>
</feature>
<feature type="compositionally biased region" description="Polar residues" evidence="2">
    <location>
        <begin position="865"/>
        <end position="877"/>
    </location>
</feature>
<feature type="compositionally biased region" description="Basic and acidic residues" evidence="2">
    <location>
        <begin position="1292"/>
        <end position="1303"/>
    </location>
</feature>
<feature type="modified residue" description="Phosphothreonine" evidence="6 7">
    <location>
        <position position="484"/>
    </location>
</feature>
<feature type="modified residue" description="Phosphoserine" evidence="6 7">
    <location>
        <position position="486"/>
    </location>
</feature>
<feature type="modified residue" description="Phosphoserine" evidence="7">
    <location>
        <position position="851"/>
    </location>
</feature>
<feature type="modified residue" description="Phosphoserine" evidence="1">
    <location>
        <position position="1027"/>
    </location>
</feature>
<feature type="modified residue" description="Phosphoserine" evidence="7">
    <location>
        <position position="1033"/>
    </location>
</feature>
<feature type="modified residue" description="Phosphoserine" evidence="7">
    <location>
        <position position="1245"/>
    </location>
</feature>
<feature type="modified residue" description="Phosphoserine" evidence="7">
    <location>
        <position position="1248"/>
    </location>
</feature>
<comment type="subcellular location">
    <subcellularLocation>
        <location evidence="3">Cell junction</location>
        <location evidence="3">Adherens junction</location>
    </subcellularLocation>
    <text evidence="3">Colocalizes with CDH5/VE-Cadherin in endothelial cells but not in epithelial cells.</text>
</comment>
<reference key="1">
    <citation type="journal article" date="2009" name="PLoS Biol.">
        <title>Lineage-specific biology revealed by a finished genome assembly of the mouse.</title>
        <authorList>
            <person name="Church D.M."/>
            <person name="Goodstadt L."/>
            <person name="Hillier L.W."/>
            <person name="Zody M.C."/>
            <person name="Goldstein S."/>
            <person name="She X."/>
            <person name="Bult C.J."/>
            <person name="Agarwala R."/>
            <person name="Cherry J.L."/>
            <person name="DiCuccio M."/>
            <person name="Hlavina W."/>
            <person name="Kapustin Y."/>
            <person name="Meric P."/>
            <person name="Maglott D."/>
            <person name="Birtle Z."/>
            <person name="Marques A.C."/>
            <person name="Graves T."/>
            <person name="Zhou S."/>
            <person name="Teague B."/>
            <person name="Potamousis K."/>
            <person name="Churas C."/>
            <person name="Place M."/>
            <person name="Herschleb J."/>
            <person name="Runnheim R."/>
            <person name="Forrest D."/>
            <person name="Amos-Landgraf J."/>
            <person name="Schwartz D.C."/>
            <person name="Cheng Z."/>
            <person name="Lindblad-Toh K."/>
            <person name="Eichler E.E."/>
            <person name="Ponting C.P."/>
        </authorList>
    </citation>
    <scope>NUCLEOTIDE SEQUENCE [LARGE SCALE GENOMIC DNA]</scope>
    <source>
        <strain>C57BL/6J</strain>
    </source>
</reference>
<reference key="2">
    <citation type="submission" date="2005-02" db="EMBL/GenBank/DDBJ databases">
        <title>Prediction of the coding sequences of mouse homologues of KIAA gene. The complete nucleotide sequences of mouse KIAA-homologous cDNAs identified by screening of terminal sequences of cDNA clones randomly sampled from size-fractionated libraries.</title>
        <authorList>
            <person name="Okazaki N."/>
            <person name="Kikuno R.F."/>
            <person name="Ohara R."/>
            <person name="Inamoto S."/>
            <person name="Nagase T."/>
            <person name="Ohara O."/>
            <person name="Koga H."/>
        </authorList>
    </citation>
    <scope>NUCLEOTIDE SEQUENCE [LARGE SCALE MRNA] OF 563-1320</scope>
    <source>
        <tissue>Fetal brain</tissue>
    </source>
</reference>
<reference key="3">
    <citation type="journal article" date="2007" name="Proc. Natl. Acad. Sci. U.S.A.">
        <title>Large-scale phosphorylation analysis of mouse liver.</title>
        <authorList>
            <person name="Villen J."/>
            <person name="Beausoleil S.A."/>
            <person name="Gerber S.A."/>
            <person name="Gygi S.P."/>
        </authorList>
    </citation>
    <scope>PHOSPHORYLATION [LARGE SCALE ANALYSIS] AT THR-484 AND SER-486</scope>
    <scope>IDENTIFICATION BY MASS SPECTROMETRY [LARGE SCALE ANALYSIS]</scope>
    <source>
        <tissue>Liver</tissue>
    </source>
</reference>
<reference key="4">
    <citation type="journal article" date="2010" name="Cell">
        <title>A tissue-specific atlas of mouse protein phosphorylation and expression.</title>
        <authorList>
            <person name="Huttlin E.L."/>
            <person name="Jedrychowski M.P."/>
            <person name="Elias J.E."/>
            <person name="Goswami T."/>
            <person name="Rad R."/>
            <person name="Beausoleil S.A."/>
            <person name="Villen J."/>
            <person name="Haas W."/>
            <person name="Sowa M.E."/>
            <person name="Gygi S.P."/>
        </authorList>
    </citation>
    <scope>PHOSPHORYLATION [LARGE SCALE ANALYSIS] AT THR-484; SER-486; SER-851; SER-1033; SER-1245 AND SER-1248</scope>
    <scope>IDENTIFICATION BY MASS SPECTROMETRY [LARGE SCALE ANALYSIS]</scope>
    <source>
        <tissue>Brain</tissue>
        <tissue>Brown adipose tissue</tissue>
        <tissue>Heart</tissue>
        <tissue>Kidney</tissue>
        <tissue>Lung</tissue>
        <tissue>Spleen</tissue>
        <tissue>Testis</tissue>
    </source>
</reference>
<reference key="5">
    <citation type="journal article" date="2011" name="Biochem. Biophys. Res. Commun.">
        <title>A coronary artery disease-associated gene product, JCAD/KIAA1462, is a novel component of endothelial cell-cell junctions.</title>
        <authorList>
            <person name="Akashi M."/>
            <person name="Higashi T."/>
            <person name="Masuda S."/>
            <person name="Komori T."/>
            <person name="Furuse M."/>
        </authorList>
    </citation>
    <scope>SUBCELLULAR LOCATION</scope>
</reference>
<organism>
    <name type="scientific">Mus musculus</name>
    <name type="common">Mouse</name>
    <dbReference type="NCBI Taxonomy" id="10090"/>
    <lineage>
        <taxon>Eukaryota</taxon>
        <taxon>Metazoa</taxon>
        <taxon>Chordata</taxon>
        <taxon>Craniata</taxon>
        <taxon>Vertebrata</taxon>
        <taxon>Euteleostomi</taxon>
        <taxon>Mammalia</taxon>
        <taxon>Eutheria</taxon>
        <taxon>Euarchontoglires</taxon>
        <taxon>Glires</taxon>
        <taxon>Rodentia</taxon>
        <taxon>Myomorpha</taxon>
        <taxon>Muroidea</taxon>
        <taxon>Muridae</taxon>
        <taxon>Murinae</taxon>
        <taxon>Mus</taxon>
        <taxon>Mus</taxon>
    </lineage>
</organism>
<name>JCAD_MOUSE</name>
<gene>
    <name evidence="4" type="primary">Jcad</name>
    <name type="synonym">Gm328</name>
    <name type="synonym">Kiaa1462</name>
</gene>
<evidence type="ECO:0000250" key="1">
    <source>
        <dbReference type="UniProtKB" id="Q9P266"/>
    </source>
</evidence>
<evidence type="ECO:0000256" key="2">
    <source>
        <dbReference type="SAM" id="MobiDB-lite"/>
    </source>
</evidence>
<evidence type="ECO:0000269" key="3">
    <source>
    </source>
</evidence>
<evidence type="ECO:0000303" key="4">
    <source>
    </source>
</evidence>
<evidence type="ECO:0000305" key="5"/>
<evidence type="ECO:0007744" key="6">
    <source>
    </source>
</evidence>
<evidence type="ECO:0007744" key="7">
    <source>
    </source>
</evidence>
<dbReference type="EMBL" id="AC147227">
    <property type="status" value="NOT_ANNOTATED_CDS"/>
    <property type="molecule type" value="Genomic_DNA"/>
</dbReference>
<dbReference type="EMBL" id="AK220394">
    <property type="protein sequence ID" value="BAD90447.1"/>
    <property type="molecule type" value="mRNA"/>
</dbReference>
<dbReference type="CCDS" id="CCDS37719.1"/>
<dbReference type="RefSeq" id="NP_001075432.1">
    <property type="nucleotide sequence ID" value="NM_001081963.1"/>
</dbReference>
<dbReference type="RefSeq" id="XP_006525966.1">
    <property type="nucleotide sequence ID" value="XM_006525903.4"/>
</dbReference>
<dbReference type="RefSeq" id="XP_006525967.1">
    <property type="nucleotide sequence ID" value="XM_006525904.4"/>
</dbReference>
<dbReference type="SMR" id="Q5DTX6"/>
<dbReference type="BioGRID" id="232179">
    <property type="interactions" value="5"/>
</dbReference>
<dbReference type="FunCoup" id="Q5DTX6">
    <property type="interactions" value="167"/>
</dbReference>
<dbReference type="STRING" id="10090.ENSMUSP00000038613"/>
<dbReference type="GlyGen" id="Q5DTX6">
    <property type="glycosylation" value="4 sites, 1 O-linked glycan (1 site)"/>
</dbReference>
<dbReference type="iPTMnet" id="Q5DTX6"/>
<dbReference type="PhosphoSitePlus" id="Q5DTX6"/>
<dbReference type="jPOST" id="Q5DTX6"/>
<dbReference type="PaxDb" id="10090-ENSMUSP00000038613"/>
<dbReference type="ProteomicsDB" id="268910"/>
<dbReference type="Pumba" id="Q5DTX6"/>
<dbReference type="Antibodypedia" id="2803">
    <property type="antibodies" value="20 antibodies from 10 providers"/>
</dbReference>
<dbReference type="Ensembl" id="ENSMUST00000037029.7">
    <property type="protein sequence ID" value="ENSMUSP00000038613.6"/>
    <property type="gene ID" value="ENSMUSG00000033960.7"/>
</dbReference>
<dbReference type="Ensembl" id="ENSMUST00000234153.2">
    <property type="protein sequence ID" value="ENSMUSP00000157313.2"/>
    <property type="gene ID" value="ENSMUSG00000033960.7"/>
</dbReference>
<dbReference type="GeneID" id="240185"/>
<dbReference type="KEGG" id="mmu:240185"/>
<dbReference type="UCSC" id="uc008dyl.1">
    <property type="organism name" value="mouse"/>
</dbReference>
<dbReference type="AGR" id="MGI:2685174"/>
<dbReference type="CTD" id="57608"/>
<dbReference type="MGI" id="MGI:2685174">
    <property type="gene designation" value="Jcad"/>
</dbReference>
<dbReference type="VEuPathDB" id="HostDB:ENSMUSG00000033960"/>
<dbReference type="eggNOG" id="ENOG502QURJ">
    <property type="taxonomic scope" value="Eukaryota"/>
</dbReference>
<dbReference type="GeneTree" id="ENSGT00390000015348"/>
<dbReference type="HOGENOM" id="CLU_005347_0_0_1"/>
<dbReference type="InParanoid" id="Q5DTX6"/>
<dbReference type="OMA" id="DERGCRQ"/>
<dbReference type="OrthoDB" id="76536at9989"/>
<dbReference type="PhylomeDB" id="Q5DTX6"/>
<dbReference type="TreeFam" id="TF335913"/>
<dbReference type="BioGRID-ORCS" id="240185">
    <property type="hits" value="4 hits in 76 CRISPR screens"/>
</dbReference>
<dbReference type="CD-CODE" id="CE726F99">
    <property type="entry name" value="Postsynaptic density"/>
</dbReference>
<dbReference type="PRO" id="PR:Q5DTX6"/>
<dbReference type="Proteomes" id="UP000000589">
    <property type="component" value="Chromosome 18"/>
</dbReference>
<dbReference type="RNAct" id="Q5DTX6">
    <property type="molecule type" value="protein"/>
</dbReference>
<dbReference type="Bgee" id="ENSMUSG00000033960">
    <property type="expression patterns" value="Expressed in gastrula and 233 other cell types or tissues"/>
</dbReference>
<dbReference type="ExpressionAtlas" id="Q5DTX6">
    <property type="expression patterns" value="baseline and differential"/>
</dbReference>
<dbReference type="GO" id="GO:0005912">
    <property type="term" value="C:adherens junction"/>
    <property type="evidence" value="ECO:0007669"/>
    <property type="project" value="UniProtKB-SubCell"/>
</dbReference>
<dbReference type="GO" id="GO:0030054">
    <property type="term" value="C:cell junction"/>
    <property type="evidence" value="ECO:0000314"/>
    <property type="project" value="MGI"/>
</dbReference>
<dbReference type="GO" id="GO:0005911">
    <property type="term" value="C:cell-cell junction"/>
    <property type="evidence" value="ECO:0000314"/>
    <property type="project" value="MGI"/>
</dbReference>
<dbReference type="GO" id="GO:0048471">
    <property type="term" value="C:perinuclear region of cytoplasm"/>
    <property type="evidence" value="ECO:0007669"/>
    <property type="project" value="Ensembl"/>
</dbReference>
<dbReference type="GO" id="GO:0032587">
    <property type="term" value="C:ruffle membrane"/>
    <property type="evidence" value="ECO:0007669"/>
    <property type="project" value="Ensembl"/>
</dbReference>
<dbReference type="GO" id="GO:0007155">
    <property type="term" value="P:cell adhesion"/>
    <property type="evidence" value="ECO:0007669"/>
    <property type="project" value="UniProtKB-KW"/>
</dbReference>
<dbReference type="GO" id="GO:1903589">
    <property type="term" value="P:positive regulation of blood vessel endothelial cell proliferation involved in sprouting angiogenesis"/>
    <property type="evidence" value="ECO:0007669"/>
    <property type="project" value="Ensembl"/>
</dbReference>
<dbReference type="GO" id="GO:0090050">
    <property type="term" value="P:positive regulation of cell migration involved in sprouting angiogenesis"/>
    <property type="evidence" value="ECO:0007669"/>
    <property type="project" value="Ensembl"/>
</dbReference>
<dbReference type="GO" id="GO:0043410">
    <property type="term" value="P:positive regulation of MAPK cascade"/>
    <property type="evidence" value="ECO:0007669"/>
    <property type="project" value="Ensembl"/>
</dbReference>
<dbReference type="GO" id="GO:1903672">
    <property type="term" value="P:positive regulation of sprouting angiogenesis"/>
    <property type="evidence" value="ECO:0000315"/>
    <property type="project" value="BHF-UCL"/>
</dbReference>
<dbReference type="GO" id="GO:1900748">
    <property type="term" value="P:positive regulation of vascular endothelial growth factor signaling pathway"/>
    <property type="evidence" value="ECO:0007669"/>
    <property type="project" value="Ensembl"/>
</dbReference>
<dbReference type="InterPro" id="IPR028221">
    <property type="entry name" value="JCAD"/>
</dbReference>
<dbReference type="PANTHER" id="PTHR34757:SF1">
    <property type="entry name" value="JUNCTIONAL CADHERIN 5-ASSOCIATED PROTEIN"/>
    <property type="match status" value="1"/>
</dbReference>
<dbReference type="PANTHER" id="PTHR34757">
    <property type="entry name" value="JUNCTIONAL PROTEIN ASSOCIATED WITH CORONARY ARTERY DISEASE"/>
    <property type="match status" value="1"/>
</dbReference>
<dbReference type="Pfam" id="PF15351">
    <property type="entry name" value="JCAD"/>
    <property type="match status" value="1"/>
</dbReference>
<proteinExistence type="evidence at protein level"/>
<keyword id="KW-0130">Cell adhesion</keyword>
<keyword id="KW-0965">Cell junction</keyword>
<keyword id="KW-0597">Phosphoprotein</keyword>
<keyword id="KW-1185">Reference proteome</keyword>
<sequence>MYSVEDLLISHGYKPARDAAAPCEDKSERCRSTRTGPRAGQGLLNGYKDGATAHTHSRTSLGTGHVSNSENRISRPRGHREHQSTSRTPEARFLNQPSLAWSSQPQSGRDDIYWSRGRQEGSGSLCPRDWKELESRGMAQAYSLPVHVRENLWEVAGRTEHVMKNAIWEEELRMQDMSLESWKKPRELGRQASDGDGRKRPQEKFEGLYPFVHGEHTSQNRKKSQSLPRALSPKSLNFTEIPVPLHDGHITGVPKVPPYPPSFPSPSEPMRNLEKASSSGPFPRPKFGKPLKTPCYSSHSQPRGEGGFQDHQHRDPRGSYPTRSKDPSHELGMLDPGLEPPVYVPPPSYRSPPQHIPNPYLEDPVPRHVSSNQSQQQVPEKPETSCPLPSGSLAARDLYDAMPGSPPQGLPPQPYPIATHGGSIQYIPFDDPRIRHIKLAQPPEFYEEAKLDDTSYNPGLLTTQEPAIGKRQYDDAPSVPRGPTPSPVNEQSSAFVHSSPRWLQGQLPLGIGPGGFHGQTEHHVMGGLTTNVTDIKAEGHASSPQPQSEGTCKTYTKLRKFETGVQSKKSSKKKSNATIFCLVSIPVKSESLVLATDTNNNDFKLVADKTRGLCQGSALQEQSLLSMSSTDLELQALMGSMAWRRTSPRQGLRESEDGQIDDPRILHLIKPKELQASSPWPGHQYRDQQTQTSFHEDSKSSQLLPATKPGEASNVAPTPTCPDTTASEVCLHTALAFSDQNQKPSVPHLQGQTSLSPSRNSAFSRTSSAINQASMSKGTSDQLPGANPVPKPEVVKGESTTGQCNSTQLFGQFLLKPVSRRPWDLISQLESFNKELQEEEESHGGSGSEDSEAEQPEDCADSRTKSWALQGTRTAQQPAGLALENVASPDRRLNDSQSWNEEPKPGHSSVHPQSLGPSQEEGSRGVPVQWADGSLTAEQKSQEDLNGMCERDFSPRPVSRIAPIDTKAAPLYCLSEPRGSQELTKFGDAVGSVQLGRETPTQVGNGGDTEVLPCVLLPLADKYRGHSTPDFRSLELTLGQEQNAYKLECLDLENTVEVLPSESLQERAERILGIEVAVESLLPSARRTEQSQLPEPDASACNPSSSREDSSHSLALPVGPKVATDAFYGRRKCGWTESPLFVGERAPQASICSDVDGFPTSQATSPEPGKKDEEAKAPFKSTLFHFMEKSTNVVGPEKRLRNPSKVVENLQEKLVSPPKKADSVHLIRMREVNSLSQMRCLSSKSADSVEEPDPLKVIKSSAWLSEGLTSLGGKDEAWQAGHLPSVSQNENGHPEVPRDKMSDQDLWCADSYDPSRVERV</sequence>
<accession>Q5DTX6</accession>
<protein>
    <recommendedName>
        <fullName evidence="5">Junctional cadherin 5-associated protein</fullName>
    </recommendedName>
    <alternativeName>
        <fullName>Junctional protein associated with coronary artery disease</fullName>
        <shortName evidence="4">JCAD</shortName>
    </alternativeName>
</protein>